<organism>
    <name type="scientific">Pseudomonas aeruginosa (strain LESB58)</name>
    <dbReference type="NCBI Taxonomy" id="557722"/>
    <lineage>
        <taxon>Bacteria</taxon>
        <taxon>Pseudomonadati</taxon>
        <taxon>Pseudomonadota</taxon>
        <taxon>Gammaproteobacteria</taxon>
        <taxon>Pseudomonadales</taxon>
        <taxon>Pseudomonadaceae</taxon>
        <taxon>Pseudomonas</taxon>
    </lineage>
</organism>
<accession>B7UVI8</accession>
<protein>
    <recommendedName>
        <fullName evidence="1">Recombination protein RecR</fullName>
    </recommendedName>
</protein>
<feature type="chain" id="PRO_1000195403" description="Recombination protein RecR">
    <location>
        <begin position="1"/>
        <end position="198"/>
    </location>
</feature>
<feature type="domain" description="Toprim" evidence="1">
    <location>
        <begin position="80"/>
        <end position="174"/>
    </location>
</feature>
<feature type="zinc finger region" description="C4-type" evidence="1">
    <location>
        <begin position="57"/>
        <end position="72"/>
    </location>
</feature>
<keyword id="KW-0227">DNA damage</keyword>
<keyword id="KW-0233">DNA recombination</keyword>
<keyword id="KW-0234">DNA repair</keyword>
<keyword id="KW-0479">Metal-binding</keyword>
<keyword id="KW-0862">Zinc</keyword>
<keyword id="KW-0863">Zinc-finger</keyword>
<proteinExistence type="inferred from homology"/>
<sequence length="198" mass="21173">MSFSPLIRQLIESLRILPGVGQKSAQRMALMLLERDRSGGLKLAQALTAAMEGVGHCRQCRTLSEEELCPQCADPRRDDSLLCVVEGPLDVFAVEQTGYRGRYFVLKGHLSPLDGLGPEAIGIPELEARIRDGAFSEVILATNPTVEGEATAHYIAQLLAGRGLTLSRIAHGVPLGGELELVDGGTLAHALAGRRPIS</sequence>
<comment type="function">
    <text evidence="1">May play a role in DNA repair. It seems to be involved in an RecBC-independent recombinational process of DNA repair. It may act with RecF and RecO.</text>
</comment>
<comment type="similarity">
    <text evidence="1">Belongs to the RecR family.</text>
</comment>
<reference key="1">
    <citation type="journal article" date="2009" name="Genome Res.">
        <title>Newly introduced genomic prophage islands are critical determinants of in vivo competitiveness in the Liverpool epidemic strain of Pseudomonas aeruginosa.</title>
        <authorList>
            <person name="Winstanley C."/>
            <person name="Langille M.G.I."/>
            <person name="Fothergill J.L."/>
            <person name="Kukavica-Ibrulj I."/>
            <person name="Paradis-Bleau C."/>
            <person name="Sanschagrin F."/>
            <person name="Thomson N.R."/>
            <person name="Winsor G.L."/>
            <person name="Quail M.A."/>
            <person name="Lennard N."/>
            <person name="Bignell A."/>
            <person name="Clarke L."/>
            <person name="Seeger K."/>
            <person name="Saunders D."/>
            <person name="Harris D."/>
            <person name="Parkhill J."/>
            <person name="Hancock R.E.W."/>
            <person name="Brinkman F.S.L."/>
            <person name="Levesque R.C."/>
        </authorList>
    </citation>
    <scope>NUCLEOTIDE SEQUENCE [LARGE SCALE GENOMIC DNA]</scope>
    <source>
        <strain>LESB58</strain>
    </source>
</reference>
<evidence type="ECO:0000255" key="1">
    <source>
        <dbReference type="HAMAP-Rule" id="MF_00017"/>
    </source>
</evidence>
<name>RECR_PSEA8</name>
<dbReference type="EMBL" id="FM209186">
    <property type="protein sequence ID" value="CAW28521.1"/>
    <property type="molecule type" value="Genomic_DNA"/>
</dbReference>
<dbReference type="RefSeq" id="WP_003087237.1">
    <property type="nucleotide sequence ID" value="NC_011770.1"/>
</dbReference>
<dbReference type="SMR" id="B7UVI8"/>
<dbReference type="KEGG" id="pag:PLES_37941"/>
<dbReference type="HOGENOM" id="CLU_060739_1_2_6"/>
<dbReference type="GO" id="GO:0003677">
    <property type="term" value="F:DNA binding"/>
    <property type="evidence" value="ECO:0007669"/>
    <property type="project" value="UniProtKB-UniRule"/>
</dbReference>
<dbReference type="GO" id="GO:0008270">
    <property type="term" value="F:zinc ion binding"/>
    <property type="evidence" value="ECO:0007669"/>
    <property type="project" value="UniProtKB-KW"/>
</dbReference>
<dbReference type="GO" id="GO:0006310">
    <property type="term" value="P:DNA recombination"/>
    <property type="evidence" value="ECO:0007669"/>
    <property type="project" value="UniProtKB-UniRule"/>
</dbReference>
<dbReference type="GO" id="GO:0006281">
    <property type="term" value="P:DNA repair"/>
    <property type="evidence" value="ECO:0007669"/>
    <property type="project" value="UniProtKB-UniRule"/>
</dbReference>
<dbReference type="CDD" id="cd01025">
    <property type="entry name" value="TOPRIM_recR"/>
    <property type="match status" value="1"/>
</dbReference>
<dbReference type="Gene3D" id="3.40.1360.10">
    <property type="match status" value="1"/>
</dbReference>
<dbReference type="Gene3D" id="6.10.250.240">
    <property type="match status" value="1"/>
</dbReference>
<dbReference type="Gene3D" id="1.10.8.420">
    <property type="entry name" value="RecR Domain 1"/>
    <property type="match status" value="1"/>
</dbReference>
<dbReference type="HAMAP" id="MF_00017">
    <property type="entry name" value="RecR"/>
    <property type="match status" value="1"/>
</dbReference>
<dbReference type="InterPro" id="IPR000093">
    <property type="entry name" value="DNA_Rcmb_RecR"/>
</dbReference>
<dbReference type="InterPro" id="IPR023627">
    <property type="entry name" value="Rcmb_RecR"/>
</dbReference>
<dbReference type="InterPro" id="IPR015967">
    <property type="entry name" value="Rcmb_RecR_Znf"/>
</dbReference>
<dbReference type="InterPro" id="IPR006171">
    <property type="entry name" value="TOPRIM_dom"/>
</dbReference>
<dbReference type="InterPro" id="IPR034137">
    <property type="entry name" value="TOPRIM_RecR"/>
</dbReference>
<dbReference type="NCBIfam" id="TIGR00615">
    <property type="entry name" value="recR"/>
    <property type="match status" value="1"/>
</dbReference>
<dbReference type="PANTHER" id="PTHR30446">
    <property type="entry name" value="RECOMBINATION PROTEIN RECR"/>
    <property type="match status" value="1"/>
</dbReference>
<dbReference type="PANTHER" id="PTHR30446:SF0">
    <property type="entry name" value="RECOMBINATION PROTEIN RECR"/>
    <property type="match status" value="1"/>
</dbReference>
<dbReference type="Pfam" id="PF21175">
    <property type="entry name" value="RecR_C"/>
    <property type="match status" value="1"/>
</dbReference>
<dbReference type="Pfam" id="PF21176">
    <property type="entry name" value="RecR_HhH"/>
    <property type="match status" value="1"/>
</dbReference>
<dbReference type="Pfam" id="PF02132">
    <property type="entry name" value="RecR_ZnF"/>
    <property type="match status" value="1"/>
</dbReference>
<dbReference type="Pfam" id="PF13662">
    <property type="entry name" value="Toprim_4"/>
    <property type="match status" value="1"/>
</dbReference>
<dbReference type="SMART" id="SM00493">
    <property type="entry name" value="TOPRIM"/>
    <property type="match status" value="1"/>
</dbReference>
<dbReference type="SUPFAM" id="SSF111304">
    <property type="entry name" value="Recombination protein RecR"/>
    <property type="match status" value="1"/>
</dbReference>
<dbReference type="PROSITE" id="PS01300">
    <property type="entry name" value="RECR"/>
    <property type="match status" value="1"/>
</dbReference>
<dbReference type="PROSITE" id="PS50880">
    <property type="entry name" value="TOPRIM"/>
    <property type="match status" value="1"/>
</dbReference>
<gene>
    <name evidence="1" type="primary">recR</name>
    <name type="ordered locus">PLES_37941</name>
</gene>